<organism>
    <name type="scientific">Mus musculus</name>
    <name type="common">Mouse</name>
    <dbReference type="NCBI Taxonomy" id="10090"/>
    <lineage>
        <taxon>Eukaryota</taxon>
        <taxon>Metazoa</taxon>
        <taxon>Chordata</taxon>
        <taxon>Craniata</taxon>
        <taxon>Vertebrata</taxon>
        <taxon>Euteleostomi</taxon>
        <taxon>Mammalia</taxon>
        <taxon>Eutheria</taxon>
        <taxon>Euarchontoglires</taxon>
        <taxon>Glires</taxon>
        <taxon>Rodentia</taxon>
        <taxon>Myomorpha</taxon>
        <taxon>Muroidea</taxon>
        <taxon>Muridae</taxon>
        <taxon>Murinae</taxon>
        <taxon>Mus</taxon>
        <taxon>Mus</taxon>
    </lineage>
</organism>
<feature type="chain" id="PRO_0000093297" description="Bile salt export pump">
    <location>
        <begin position="1"/>
        <end position="1321"/>
    </location>
</feature>
<feature type="topological domain" description="Cytoplasmic" evidence="4">
    <location>
        <begin position="1"/>
        <end position="62"/>
    </location>
</feature>
<feature type="transmembrane region" description="Helical" evidence="6">
    <location>
        <begin position="63"/>
        <end position="83"/>
    </location>
</feature>
<feature type="topological domain" description="Extracellular" evidence="4">
    <location>
        <begin position="84"/>
        <end position="147"/>
    </location>
</feature>
<feature type="transmembrane region" description="Helical" evidence="6">
    <location>
        <begin position="148"/>
        <end position="168"/>
    </location>
</feature>
<feature type="topological domain" description="Cytoplasmic" evidence="4">
    <location>
        <begin position="169"/>
        <end position="215"/>
    </location>
</feature>
<feature type="transmembrane region" description="Helical" evidence="6">
    <location>
        <begin position="216"/>
        <end position="236"/>
    </location>
</feature>
<feature type="topological domain" description="Extracellular" evidence="4">
    <location>
        <begin position="237"/>
        <end position="240"/>
    </location>
</feature>
<feature type="transmembrane region" description="Helical" evidence="6">
    <location>
        <begin position="241"/>
        <end position="261"/>
    </location>
</feature>
<feature type="topological domain" description="Cytoplasmic" evidence="4">
    <location>
        <begin position="262"/>
        <end position="319"/>
    </location>
</feature>
<feature type="transmembrane region" description="Helical" evidence="6">
    <location>
        <begin position="320"/>
        <end position="340"/>
    </location>
</feature>
<feature type="topological domain" description="Extracellular" evidence="4">
    <location>
        <begin position="341"/>
        <end position="353"/>
    </location>
</feature>
<feature type="transmembrane region" description="Helical" evidence="6">
    <location>
        <begin position="354"/>
        <end position="374"/>
    </location>
</feature>
<feature type="topological domain" description="Cytoplasmic" evidence="4">
    <location>
        <begin position="375"/>
        <end position="755"/>
    </location>
</feature>
<feature type="transmembrane region" description="Helical" evidence="6">
    <location>
        <begin position="756"/>
        <end position="776"/>
    </location>
</feature>
<feature type="topological domain" description="Extracellular" evidence="4">
    <location>
        <begin position="777"/>
        <end position="794"/>
    </location>
</feature>
<feature type="transmembrane region" description="Helical" evidence="6">
    <location>
        <begin position="795"/>
        <end position="815"/>
    </location>
</feature>
<feature type="topological domain" description="Cytoplasmic" evidence="4">
    <location>
        <begin position="816"/>
        <end position="869"/>
    </location>
</feature>
<feature type="transmembrane region" description="Helical" evidence="6">
    <location>
        <begin position="870"/>
        <end position="890"/>
    </location>
</feature>
<feature type="transmembrane region" description="Helical" evidence="6">
    <location>
        <begin position="891"/>
        <end position="911"/>
    </location>
</feature>
<feature type="topological domain" description="Cytoplasmic" evidence="4">
    <location>
        <begin position="912"/>
        <end position="979"/>
    </location>
</feature>
<feature type="transmembrane region" description="Helical" evidence="6">
    <location>
        <begin position="980"/>
        <end position="1000"/>
    </location>
</feature>
<feature type="topological domain" description="Extracellular" evidence="4">
    <location>
        <begin position="1001"/>
        <end position="1011"/>
    </location>
</feature>
<feature type="transmembrane region" description="Helical" evidence="6">
    <location>
        <begin position="1012"/>
        <end position="1032"/>
    </location>
</feature>
<feature type="topological domain" description="Cytoplasmic" evidence="4">
    <location>
        <begin position="1033"/>
        <end position="1321"/>
    </location>
</feature>
<feature type="domain" description="ABC transmembrane type-1 1" evidence="6">
    <location>
        <begin position="62"/>
        <end position="385"/>
    </location>
</feature>
<feature type="domain" description="ABC transporter 1" evidence="5">
    <location>
        <begin position="420"/>
        <end position="656"/>
    </location>
</feature>
<feature type="domain" description="ABC transmembrane type-1 2" evidence="6">
    <location>
        <begin position="755"/>
        <end position="1043"/>
    </location>
</feature>
<feature type="domain" description="ABC transporter 2" evidence="5">
    <location>
        <begin position="1078"/>
        <end position="1316"/>
    </location>
</feature>
<feature type="region of interest" description="Interaction with HAX1" evidence="1">
    <location>
        <begin position="651"/>
        <end position="674"/>
    </location>
</feature>
<feature type="region of interest" description="Disordered" evidence="7">
    <location>
        <begin position="662"/>
        <end position="722"/>
    </location>
</feature>
<feature type="compositionally biased region" description="Basic and acidic residues" evidence="7">
    <location>
        <begin position="662"/>
        <end position="684"/>
    </location>
</feature>
<feature type="binding site" evidence="5">
    <location>
        <begin position="455"/>
        <end position="462"/>
    </location>
    <ligand>
        <name>ATP</name>
        <dbReference type="ChEBI" id="CHEBI:30616"/>
        <label>1</label>
    </ligand>
</feature>
<feature type="binding site" evidence="5">
    <location>
        <begin position="1113"/>
        <end position="1120"/>
    </location>
    <ligand>
        <name>ATP</name>
        <dbReference type="ChEBI" id="CHEBI:30616"/>
        <label>2</label>
    </ligand>
</feature>
<feature type="modified residue" description="Phosphothreonine" evidence="3">
    <location>
        <position position="586"/>
    </location>
</feature>
<feature type="modified residue" description="Phosphoserine" evidence="3">
    <location>
        <position position="587"/>
    </location>
</feature>
<feature type="modified residue" description="Phosphoserine" evidence="17">
    <location>
        <position position="692"/>
    </location>
</feature>
<feature type="modified residue" description="Phosphoserine" evidence="2">
    <location>
        <position position="703"/>
    </location>
</feature>
<feature type="modified residue" description="Phosphoserine" evidence="3">
    <location>
        <position position="706"/>
    </location>
</feature>
<feature type="modified residue" description="Phosphoserine" evidence="2">
    <location>
        <position position="1321"/>
    </location>
</feature>
<feature type="glycosylation site" description="N-linked (GlcNAc...) asparagine" evidence="4">
    <location>
        <position position="109"/>
    </location>
</feature>
<feature type="glycosylation site" description="N-linked (GlcNAc...) asparagine" evidence="4">
    <location>
        <position position="116"/>
    </location>
</feature>
<feature type="glycosylation site" description="N-linked (GlcNAc...) asparagine" evidence="4">
    <location>
        <position position="122"/>
    </location>
</feature>
<feature type="glycosylation site" description="N-linked (GlcNAc...) asparagine" evidence="4">
    <location>
        <position position="125"/>
    </location>
</feature>
<feature type="sequence conflict" description="In Ref. 1; AAF14372." evidence="14" ref="1">
    <original>E</original>
    <variation>G</variation>
    <location>
        <position position="104"/>
    </location>
</feature>
<feature type="sequence conflict" description="In Ref. 3; AAD56419." evidence="14" ref="3">
    <original>L</original>
    <variation>P</variation>
    <location>
        <position position="481"/>
    </location>
</feature>
<feature type="sequence conflict" description="In Ref. 3; AAD56419." evidence="14" ref="3">
    <original>T</original>
    <variation>V</variation>
    <location>
        <position position="633"/>
    </location>
</feature>
<comment type="function">
    <text evidence="3 8 9 10 11 12">Catalyzes the transport of the major hydrophobic bile salts, such as taurine and glycine-conjugated cholic acid across the canalicular membrane of hepatocytes in an ATP-dependent manner, therefore participates in hepatic bile acid homeostasis and consequently to lipid homeostasis through regulation of biliary lipid secretion in a bile salts dependent manner (PubMed:11172067, PubMed:14570929, PubMed:19228692, PubMed:22619174, PubMed:23764895). Transports taurine-conjugated bile salts more rapidly than glycine-conjugated bile salts (By similarity). Also transports non-bile acid compounds, such as pravastatin and fexofenadine in an ATP-dependent manner and may be involved in their biliary excretion (By similarity).</text>
</comment>
<comment type="catalytic activity">
    <reaction evidence="3">
        <text>cholate(in) + ATP + H2O = cholate(out) + ADP + phosphate + H(+)</text>
        <dbReference type="Rhea" id="RHEA:50048"/>
        <dbReference type="ChEBI" id="CHEBI:15377"/>
        <dbReference type="ChEBI" id="CHEBI:15378"/>
        <dbReference type="ChEBI" id="CHEBI:29747"/>
        <dbReference type="ChEBI" id="CHEBI:30616"/>
        <dbReference type="ChEBI" id="CHEBI:43474"/>
        <dbReference type="ChEBI" id="CHEBI:456216"/>
    </reaction>
    <physiologicalReaction direction="left-to-right" evidence="3">
        <dbReference type="Rhea" id="RHEA:50049"/>
    </physiologicalReaction>
</comment>
<comment type="catalytic activity">
    <reaction evidence="15">
        <text>taurocholate(in) + ATP + H2O = taurocholate(out) + ADP + phosphate + H(+)</text>
        <dbReference type="Rhea" id="RHEA:50052"/>
        <dbReference type="ChEBI" id="CHEBI:15377"/>
        <dbReference type="ChEBI" id="CHEBI:15378"/>
        <dbReference type="ChEBI" id="CHEBI:30616"/>
        <dbReference type="ChEBI" id="CHEBI:36257"/>
        <dbReference type="ChEBI" id="CHEBI:43474"/>
        <dbReference type="ChEBI" id="CHEBI:456216"/>
    </reaction>
    <physiologicalReaction direction="left-to-right" evidence="15">
        <dbReference type="Rhea" id="RHEA:50053"/>
    </physiologicalReaction>
</comment>
<comment type="catalytic activity">
    <reaction evidence="3">
        <text>glycocholate(in) + ATP + H2O = glycocholate(out) + ADP + phosphate + H(+)</text>
        <dbReference type="Rhea" id="RHEA:50056"/>
        <dbReference type="ChEBI" id="CHEBI:15377"/>
        <dbReference type="ChEBI" id="CHEBI:15378"/>
        <dbReference type="ChEBI" id="CHEBI:29746"/>
        <dbReference type="ChEBI" id="CHEBI:30616"/>
        <dbReference type="ChEBI" id="CHEBI:43474"/>
        <dbReference type="ChEBI" id="CHEBI:456216"/>
    </reaction>
    <physiologicalReaction direction="left-to-right" evidence="3">
        <dbReference type="Rhea" id="RHEA:50057"/>
    </physiologicalReaction>
</comment>
<comment type="catalytic activity">
    <reaction evidence="3">
        <text>glycochenodeoxycholate(in) + ATP + H2O = glycochenodeoxycholate(out) + ADP + phosphate + H(+)</text>
        <dbReference type="Rhea" id="RHEA:50060"/>
        <dbReference type="ChEBI" id="CHEBI:15377"/>
        <dbReference type="ChEBI" id="CHEBI:15378"/>
        <dbReference type="ChEBI" id="CHEBI:30616"/>
        <dbReference type="ChEBI" id="CHEBI:36252"/>
        <dbReference type="ChEBI" id="CHEBI:43474"/>
        <dbReference type="ChEBI" id="CHEBI:456216"/>
    </reaction>
    <physiologicalReaction direction="left-to-right" evidence="3">
        <dbReference type="Rhea" id="RHEA:50061"/>
    </physiologicalReaction>
</comment>
<comment type="catalytic activity">
    <reaction evidence="3">
        <text>taurochenodeoxycholate(in) + ATP + H2O = taurochenodeoxycholate(out) + ADP + phosphate + H(+)</text>
        <dbReference type="Rhea" id="RHEA:50064"/>
        <dbReference type="ChEBI" id="CHEBI:9407"/>
        <dbReference type="ChEBI" id="CHEBI:15377"/>
        <dbReference type="ChEBI" id="CHEBI:15378"/>
        <dbReference type="ChEBI" id="CHEBI:30616"/>
        <dbReference type="ChEBI" id="CHEBI:43474"/>
        <dbReference type="ChEBI" id="CHEBI:456216"/>
    </reaction>
    <physiologicalReaction direction="left-to-right" evidence="3">
        <dbReference type="Rhea" id="RHEA:50065"/>
    </physiologicalReaction>
</comment>
<comment type="catalytic activity">
    <reaction evidence="3">
        <text>glycoursodeoxycholate(in) + ATP + H2O = glycoursodeoxycholate(out) + ADP + phosphate + H(+)</text>
        <dbReference type="Rhea" id="RHEA:50068"/>
        <dbReference type="ChEBI" id="CHEBI:15377"/>
        <dbReference type="ChEBI" id="CHEBI:15378"/>
        <dbReference type="ChEBI" id="CHEBI:30616"/>
        <dbReference type="ChEBI" id="CHEBI:43474"/>
        <dbReference type="ChEBI" id="CHEBI:132030"/>
        <dbReference type="ChEBI" id="CHEBI:456216"/>
    </reaction>
    <physiologicalReaction direction="left-to-right" evidence="3">
        <dbReference type="Rhea" id="RHEA:50069"/>
    </physiologicalReaction>
</comment>
<comment type="catalytic activity">
    <reaction evidence="12">
        <text>tauroursodeoxycholate(in) + ATP + H2O = tauroursodeoxycholate(out) + ADP + phosphate + H(+)</text>
        <dbReference type="Rhea" id="RHEA:50072"/>
        <dbReference type="ChEBI" id="CHEBI:15377"/>
        <dbReference type="ChEBI" id="CHEBI:15378"/>
        <dbReference type="ChEBI" id="CHEBI:30616"/>
        <dbReference type="ChEBI" id="CHEBI:43474"/>
        <dbReference type="ChEBI" id="CHEBI:132028"/>
        <dbReference type="ChEBI" id="CHEBI:456216"/>
    </reaction>
    <physiologicalReaction direction="left-to-right" evidence="12">
        <dbReference type="Rhea" id="RHEA:50073"/>
    </physiologicalReaction>
</comment>
<comment type="catalytic activity">
    <reaction evidence="3">
        <text>taurodeoxycholate(in) + ATP + H2O = taurodeoxycholate(out) + ADP + phosphate + H(+)</text>
        <dbReference type="Rhea" id="RHEA:50080"/>
        <dbReference type="ChEBI" id="CHEBI:15377"/>
        <dbReference type="ChEBI" id="CHEBI:15378"/>
        <dbReference type="ChEBI" id="CHEBI:30616"/>
        <dbReference type="ChEBI" id="CHEBI:36261"/>
        <dbReference type="ChEBI" id="CHEBI:43474"/>
        <dbReference type="ChEBI" id="CHEBI:456216"/>
    </reaction>
</comment>
<comment type="catalytic activity">
    <reaction evidence="3">
        <text>taurolithocholate 3-sulfate(in) + ATP + H2O = taurolithocholate 3-sulfate(out) + ADP + phosphate + H(+)</text>
        <dbReference type="Rhea" id="RHEA:50084"/>
        <dbReference type="ChEBI" id="CHEBI:15377"/>
        <dbReference type="ChEBI" id="CHEBI:15378"/>
        <dbReference type="ChEBI" id="CHEBI:30616"/>
        <dbReference type="ChEBI" id="CHEBI:43474"/>
        <dbReference type="ChEBI" id="CHEBI:58301"/>
        <dbReference type="ChEBI" id="CHEBI:456216"/>
    </reaction>
    <physiologicalReaction direction="left-to-right" evidence="3">
        <dbReference type="Rhea" id="RHEA:50085"/>
    </physiologicalReaction>
</comment>
<comment type="catalytic activity">
    <reaction evidence="3">
        <text>pravastatin(in) + ATP + H2O = pravastatin(out) + ADP + phosphate + H(+)</text>
        <dbReference type="Rhea" id="RHEA:63908"/>
        <dbReference type="ChEBI" id="CHEBI:15377"/>
        <dbReference type="ChEBI" id="CHEBI:15378"/>
        <dbReference type="ChEBI" id="CHEBI:30616"/>
        <dbReference type="ChEBI" id="CHEBI:43474"/>
        <dbReference type="ChEBI" id="CHEBI:63660"/>
        <dbReference type="ChEBI" id="CHEBI:456216"/>
    </reaction>
    <physiologicalReaction direction="left-to-right" evidence="3">
        <dbReference type="Rhea" id="RHEA:63909"/>
    </physiologicalReaction>
</comment>
<comment type="activity regulation">
    <text evidence="3 10">The uptake of taurocholate is inhibited by taurolithocholate sulfate with an IC(50) of 9 uM. Pravastatin competitively inhibits the transport of taurocholic acid. Cyclosporin A, glibenclamide, rifampicin and troglitazonestrongly competitively inhibit the transport activity of taurocholate (By similarity). The canalicular transport activity of taurocholate is strongly dependent on canalicular membrane cholesterol content (By similarity) (PubMed:19228692). The uptake of taurocholate is increased by short- and medium-chain fatty acids. Cholesterol increases transport capacity of taurocholate without affecting the affinity for the substrate (By similarity).</text>
</comment>
<comment type="subunit">
    <text evidence="2 3">Interacts with HAX1 (By similarity). Interacts with the adapter protein complex 2 (AP-2) throught AP2A2 or AP2A1; this interaction regulates cell membrane expression of ABCB11 through its internalization in a clathrin-dependent manner and its subsequent degradation (By similarity).</text>
</comment>
<comment type="subcellular location">
    <subcellularLocation>
        <location evidence="2">Apical cell membrane</location>
        <topology evidence="2">Multi-pass membrane protein</topology>
    </subcellularLocation>
    <subcellularLocation>
        <location evidence="2">Recycling endosome membrane</location>
        <topology evidence="2">Multi-pass membrane protein</topology>
    </subcellularLocation>
    <subcellularLocation>
        <location evidence="2">Endosome</location>
    </subcellularLocation>
    <subcellularLocation>
        <location evidence="2">Cell membrane</location>
        <topology evidence="2">Multi-pass membrane protein</topology>
    </subcellularLocation>
    <text evidence="2 3">Internalized at the canalicular membrane through interaction with the adapter protein complex 2 (AP-2). At steady state, localizes in the canalicular membrane but is also present in recycling endosomes. ABCB11 constantly and rapidly exchanges between the two sites through tubulo-vesicles carriers that move along microtubules. Microtubule-dependent trafficking of ABCB11 is enhanced by taurocholate and cAMP and regulated by STK11 through a PKA-mediated pathway. Trafficking of newly synthesized ABCB11 through endosomal compartment to the bile canalicular membrane is accelerated by cAMP but not by taurocholate (By similarity). Cell membrane expression is up-regulated by short- and medium-chain fatty acids (By similarity).</text>
</comment>
<comment type="tissue specificity">
    <text>Expressed predominantly, if not exclusively in the liver, where it was further localized to the canalicular microvilli and to subcanalicular vesicles of the hepatocytes by in situ.</text>
</comment>
<comment type="domain">
    <text>Multifunctional polypeptide with two homologous halves, each containing a hydrophobic membrane-anchoring domain and an ATP binding cassette (ABC) domain.</text>
</comment>
<comment type="PTM">
    <text evidence="3">N-glycosylated.</text>
</comment>
<comment type="PTM">
    <text evidence="3">Ubiquitinated; short-chain ubiquitination regulates cell-Surface expression of ABCB11.</text>
</comment>
<comment type="disruption phenotype">
    <text evidence="8 9 11">Transgenic mice with up-regulated liver canalicular membrane expression of Abcb11 appear healthy and normal and demonstrate any difference in longevity. Transgenic mice exhibit a normal reproductive rate and gender distribution and are born in a normal Mendelian distribution. Transgenic mice have food consumption identical to their background strain controls. Transgenic mice manifest increases of both bile flow and biliary lipid secretion and are resistant to the development of hepatic steatosis (PubMed:14570929). Homozygous Abcb11 knockout mice on a mixed genetic background are viable and fertile, but displayed growth retardation. Their body weight is about 20% lower than their wild-type littermates at weaning (21 days after birth). They tend to have a lower body weight throughout their life, but display only mild non progressive cholestasis (PubMed:11172067). Homozygous Abcb11 knockout mice on a pure C57BL/6J background exhibit a progressive intrahepatic cholestasis due to an hepatic bile acid retention and an alteration of lipid metabolism (PubMed:22619174).</text>
</comment>
<comment type="similarity">
    <text evidence="14">Belongs to the ABC transporter superfamily. ABCB family. Multidrug resistance exporter (TC 3.A.1.201) subfamily.</text>
</comment>
<protein>
    <recommendedName>
        <fullName evidence="13">Bile salt export pump</fullName>
        <ecNumber evidence="12">7.6.2.-</ecNumber>
    </recommendedName>
    <alternativeName>
        <fullName>ATP-binding cassette sub-family B member 11</fullName>
    </alternativeName>
    <alternativeName>
        <fullName evidence="2">Sister of P-glycoprotein</fullName>
    </alternativeName>
</protein>
<gene>
    <name evidence="16" type="primary">Abcb11</name>
    <name evidence="13" type="synonym">Bsep</name>
    <name type="synonym">Spgp</name>
</gene>
<accession>Q9QY30</accession>
<accession>A2AUN4</accession>
<accession>Q9QZE8</accession>
<name>ABCBB_MOUSE</name>
<keyword id="KW-0067">ATP-binding</keyword>
<keyword id="KW-1003">Cell membrane</keyword>
<keyword id="KW-0967">Endosome</keyword>
<keyword id="KW-0325">Glycoprotein</keyword>
<keyword id="KW-0445">Lipid transport</keyword>
<keyword id="KW-0472">Membrane</keyword>
<keyword id="KW-0547">Nucleotide-binding</keyword>
<keyword id="KW-0597">Phosphoprotein</keyword>
<keyword id="KW-1185">Reference proteome</keyword>
<keyword id="KW-0677">Repeat</keyword>
<keyword id="KW-1278">Translocase</keyword>
<keyword id="KW-0812">Transmembrane</keyword>
<keyword id="KW-1133">Transmembrane helix</keyword>
<keyword id="KW-0813">Transport</keyword>
<keyword id="KW-0832">Ubl conjugation</keyword>
<reference key="1">
    <citation type="journal article" date="2000" name="Gene">
        <title>Molecular cloning and characterization of the murine bile salt export pump.</title>
        <authorList>
            <person name="Green R.M."/>
            <person name="Hoda F."/>
            <person name="Ward K.L."/>
        </authorList>
    </citation>
    <scope>NUCLEOTIDE SEQUENCE [MRNA]</scope>
    <source>
        <tissue>Liver</tissue>
    </source>
</reference>
<reference key="2">
    <citation type="journal article" date="2009" name="PLoS Biol.">
        <title>Lineage-specific biology revealed by a finished genome assembly of the mouse.</title>
        <authorList>
            <person name="Church D.M."/>
            <person name="Goodstadt L."/>
            <person name="Hillier L.W."/>
            <person name="Zody M.C."/>
            <person name="Goldstein S."/>
            <person name="She X."/>
            <person name="Bult C.J."/>
            <person name="Agarwala R."/>
            <person name="Cherry J.L."/>
            <person name="DiCuccio M."/>
            <person name="Hlavina W."/>
            <person name="Kapustin Y."/>
            <person name="Meric P."/>
            <person name="Maglott D."/>
            <person name="Birtle Z."/>
            <person name="Marques A.C."/>
            <person name="Graves T."/>
            <person name="Zhou S."/>
            <person name="Teague B."/>
            <person name="Potamousis K."/>
            <person name="Churas C."/>
            <person name="Place M."/>
            <person name="Herschleb J."/>
            <person name="Runnheim R."/>
            <person name="Forrest D."/>
            <person name="Amos-Landgraf J."/>
            <person name="Schwartz D.C."/>
            <person name="Cheng Z."/>
            <person name="Lindblad-Toh K."/>
            <person name="Eichler E.E."/>
            <person name="Ponting C.P."/>
        </authorList>
    </citation>
    <scope>NUCLEOTIDE SEQUENCE [LARGE SCALE GENOMIC DNA]</scope>
    <source>
        <strain>C57BL/6J</strain>
    </source>
</reference>
<reference key="3">
    <citation type="submission" date="2005-07" db="EMBL/GenBank/DDBJ databases">
        <authorList>
            <person name="Mural R.J."/>
            <person name="Adams M.D."/>
            <person name="Myers E.W."/>
            <person name="Smith H.O."/>
            <person name="Venter J.C."/>
        </authorList>
    </citation>
    <scope>NUCLEOTIDE SEQUENCE [LARGE SCALE GENOMIC DNA]</scope>
</reference>
<reference key="4">
    <citation type="submission" date="1999-09" db="EMBL/GenBank/DDBJ databases">
        <title>Molecular cloning of mouse liver bile salt export pump (bsep).</title>
        <authorList>
            <person name="Salkar R."/>
            <person name="Suchy F.J."/>
            <person name="Ananthanarayanan M."/>
        </authorList>
    </citation>
    <scope>NUCLEOTIDE SEQUENCE [MRNA] OF 463-635</scope>
    <source>
        <strain>C57BL/6J</strain>
        <tissue>Liver</tissue>
    </source>
</reference>
<reference key="5">
    <citation type="journal article" date="2001" name="Proc. Natl. Acad. Sci. U.S.A.">
        <title>Targeted inactivation of sister of P-glycoprotein gene (spgp) in mice results in nonprogressive but persistent intrahepatic cholestasis.</title>
        <authorList>
            <person name="Wang R."/>
            <person name="Salem M."/>
            <person name="Yousef I.M."/>
            <person name="Tuchweber B."/>
            <person name="Lam P."/>
            <person name="Childs S.J."/>
            <person name="Helgason C.D."/>
            <person name="Ackerley C."/>
            <person name="Phillips M.J."/>
            <person name="Ling V."/>
        </authorList>
    </citation>
    <scope>DISRUPTION PHENOTYPE</scope>
    <scope>FUNCTION</scope>
</reference>
<reference key="6">
    <citation type="journal article" date="2004" name="J. Biol. Chem.">
        <title>Hepatic overexpression of murine Abcb11 increases hepatobiliary lipid secretion and reduces hepatic steatosis.</title>
        <authorList>
            <person name="Figge A."/>
            <person name="Lammert F."/>
            <person name="Paigen B."/>
            <person name="Henkel A."/>
            <person name="Matern S."/>
            <person name="Korstanje R."/>
            <person name="Shneider B.L."/>
            <person name="Chen F."/>
            <person name="Stoltenberg E."/>
            <person name="Spatz K."/>
            <person name="Hoda F."/>
            <person name="Cohen D.E."/>
            <person name="Green R.M."/>
        </authorList>
    </citation>
    <scope>DISRUPTION PHENOTYPE</scope>
    <scope>FUNCTION</scope>
</reference>
<reference key="7">
    <citation type="journal article" date="2007" name="Proc. Natl. Acad. Sci. U.S.A.">
        <title>Large-scale phosphorylation analysis of mouse liver.</title>
        <authorList>
            <person name="Villen J."/>
            <person name="Beausoleil S.A."/>
            <person name="Gerber S.A."/>
            <person name="Gygi S.P."/>
        </authorList>
    </citation>
    <scope>PHOSPHORYLATION [LARGE SCALE ANALYSIS] AT SER-692</scope>
    <scope>IDENTIFICATION BY MASS SPECTROMETRY [LARGE SCALE ANALYSIS]</scope>
    <source>
        <tissue>Liver</tissue>
    </source>
</reference>
<reference key="8">
    <citation type="journal article" date="2009" name="J. Biol. Chem.">
        <title>Activity of the bile salt export pump (ABCB11) is critically dependent on canalicular membrane cholesterol content.</title>
        <authorList>
            <person name="Paulusma C.C."/>
            <person name="de Waart D.R."/>
            <person name="Kunne C."/>
            <person name="Mok K.S."/>
            <person name="Elferink R.P."/>
        </authorList>
    </citation>
    <scope>FUNCTION</scope>
    <scope>ACTIVITY REGULATION</scope>
    <scope>CATALYTIC ACTIVITY</scope>
</reference>
<reference key="9">
    <citation type="journal article" date="2010" name="Cell">
        <title>A tissue-specific atlas of mouse protein phosphorylation and expression.</title>
        <authorList>
            <person name="Huttlin E.L."/>
            <person name="Jedrychowski M.P."/>
            <person name="Elias J.E."/>
            <person name="Goswami T."/>
            <person name="Rad R."/>
            <person name="Beausoleil S.A."/>
            <person name="Villen J."/>
            <person name="Haas W."/>
            <person name="Sowa M.E."/>
            <person name="Gygi S.P."/>
        </authorList>
    </citation>
    <scope>IDENTIFICATION BY MASS SPECTROMETRY [LARGE SCALE ANALYSIS]</scope>
    <source>
        <tissue>Liver</tissue>
    </source>
</reference>
<reference key="10">
    <citation type="journal article" date="2012" name="J. Biol. Chem.">
        <title>Abcb11 deficiency induces cholestasis coupled to impaired beta-fatty acid oxidation in mice.</title>
        <authorList>
            <person name="Zhang Y."/>
            <person name="Li F."/>
            <person name="Patterson A.D."/>
            <person name="Wang Y."/>
            <person name="Krausz K.W."/>
            <person name="Neale G."/>
            <person name="Thomas S."/>
            <person name="Nachagari D."/>
            <person name="Vogel P."/>
            <person name="Vore M."/>
            <person name="Gonzalez F.J."/>
            <person name="Schuetz J.D."/>
        </authorList>
    </citation>
    <scope>DISRUPTION PHENOTYPE</scope>
    <scope>FUNCTION</scope>
</reference>
<reference key="11">
    <citation type="journal article" date="2013" name="Am. J. Physiol.">
        <title>Defective canalicular transport and toxicity of dietary ursodeoxycholic acid in the abcb11-/- mouse: transport and gene expression studies.</title>
        <authorList>
            <person name="Wang R."/>
            <person name="Liu L."/>
            <person name="Sheps J.A."/>
            <person name="Forrest D."/>
            <person name="Hofmann A.F."/>
            <person name="Hagey L.R."/>
            <person name="Ling V."/>
        </authorList>
    </citation>
    <scope>CATALYTIC ACTIVITY</scope>
    <scope>FUNCTION</scope>
</reference>
<proteinExistence type="evidence at protein level"/>
<dbReference type="EC" id="7.6.2.-" evidence="12"/>
<dbReference type="EMBL" id="AF133903">
    <property type="protein sequence ID" value="AAF14372.1"/>
    <property type="molecule type" value="mRNA"/>
</dbReference>
<dbReference type="EMBL" id="AL929170">
    <property type="status" value="NOT_ANNOTATED_CDS"/>
    <property type="molecule type" value="Genomic_DNA"/>
</dbReference>
<dbReference type="EMBL" id="CH466519">
    <property type="protein sequence ID" value="EDL27032.1"/>
    <property type="molecule type" value="Genomic_DNA"/>
</dbReference>
<dbReference type="EMBL" id="AF186585">
    <property type="protein sequence ID" value="AAD56419.1"/>
    <property type="molecule type" value="mRNA"/>
</dbReference>
<dbReference type="CCDS" id="CCDS16090.1"/>
<dbReference type="RefSeq" id="NP_001350421.1">
    <property type="nucleotide sequence ID" value="NM_001363492.1"/>
</dbReference>
<dbReference type="RefSeq" id="NP_066302.2">
    <property type="nucleotide sequence ID" value="NM_021022.3"/>
</dbReference>
<dbReference type="RefSeq" id="XP_006499732.1">
    <property type="nucleotide sequence ID" value="XM_006499669.3"/>
</dbReference>
<dbReference type="SMR" id="Q9QY30"/>
<dbReference type="FunCoup" id="Q9QY30">
    <property type="interactions" value="203"/>
</dbReference>
<dbReference type="STRING" id="10090.ENSMUSP00000099770"/>
<dbReference type="ChEMBL" id="CHEMBL2073695"/>
<dbReference type="GlyCosmos" id="Q9QY30">
    <property type="glycosylation" value="4 sites, No reported glycans"/>
</dbReference>
<dbReference type="GlyGen" id="Q9QY30">
    <property type="glycosylation" value="4 sites"/>
</dbReference>
<dbReference type="iPTMnet" id="Q9QY30"/>
<dbReference type="PhosphoSitePlus" id="Q9QY30"/>
<dbReference type="SwissPalm" id="Q9QY30"/>
<dbReference type="jPOST" id="Q9QY30"/>
<dbReference type="PaxDb" id="10090-ENSMUSP00000099771"/>
<dbReference type="ProteomicsDB" id="296470"/>
<dbReference type="Pumba" id="Q9QY30"/>
<dbReference type="Antibodypedia" id="1033">
    <property type="antibodies" value="249 antibodies from 34 providers"/>
</dbReference>
<dbReference type="DNASU" id="27413"/>
<dbReference type="Ensembl" id="ENSMUST00000102709.8">
    <property type="protein sequence ID" value="ENSMUSP00000099770.2"/>
    <property type="gene ID" value="ENSMUSG00000027048.17"/>
</dbReference>
<dbReference type="Ensembl" id="ENSMUST00000102710.10">
    <property type="protein sequence ID" value="ENSMUSP00000099771.4"/>
    <property type="gene ID" value="ENSMUSG00000027048.17"/>
</dbReference>
<dbReference type="GeneID" id="27413"/>
<dbReference type="KEGG" id="mmu:27413"/>
<dbReference type="UCSC" id="uc008jya.1">
    <property type="organism name" value="mouse"/>
</dbReference>
<dbReference type="AGR" id="MGI:1351619"/>
<dbReference type="CTD" id="8647"/>
<dbReference type="MGI" id="MGI:1351619">
    <property type="gene designation" value="Abcb11"/>
</dbReference>
<dbReference type="VEuPathDB" id="HostDB:ENSMUSG00000027048"/>
<dbReference type="eggNOG" id="KOG0055">
    <property type="taxonomic scope" value="Eukaryota"/>
</dbReference>
<dbReference type="GeneTree" id="ENSGT00940000157564"/>
<dbReference type="HOGENOM" id="CLU_000604_17_2_1"/>
<dbReference type="InParanoid" id="Q9QY30"/>
<dbReference type="OMA" id="GFGQEEQ"/>
<dbReference type="OrthoDB" id="6500128at2759"/>
<dbReference type="PhylomeDB" id="Q9QY30"/>
<dbReference type="TreeFam" id="TF105193"/>
<dbReference type="Reactome" id="R-MMU-159418">
    <property type="pathway name" value="Recycling of bile acids and salts"/>
</dbReference>
<dbReference type="Reactome" id="R-MMU-193368">
    <property type="pathway name" value="Synthesis of bile acids and bile salts via 7alpha-hydroxycholesterol"/>
</dbReference>
<dbReference type="BioGRID-ORCS" id="27413">
    <property type="hits" value="1 hit in 79 CRISPR screens"/>
</dbReference>
<dbReference type="PRO" id="PR:Q9QY30"/>
<dbReference type="Proteomes" id="UP000000589">
    <property type="component" value="Chromosome 2"/>
</dbReference>
<dbReference type="RNAct" id="Q9QY30">
    <property type="molecule type" value="protein"/>
</dbReference>
<dbReference type="Bgee" id="ENSMUSG00000027048">
    <property type="expression patterns" value="Expressed in left lobe of liver and 24 other cell types or tissues"/>
</dbReference>
<dbReference type="ExpressionAtlas" id="Q9QY30">
    <property type="expression patterns" value="baseline and differential"/>
</dbReference>
<dbReference type="GO" id="GO:0045177">
    <property type="term" value="C:apical part of cell"/>
    <property type="evidence" value="ECO:0000314"/>
    <property type="project" value="MGI"/>
</dbReference>
<dbReference type="GO" id="GO:0016324">
    <property type="term" value="C:apical plasma membrane"/>
    <property type="evidence" value="ECO:0000250"/>
    <property type="project" value="UniProtKB"/>
</dbReference>
<dbReference type="GO" id="GO:0009986">
    <property type="term" value="C:cell surface"/>
    <property type="evidence" value="ECO:0000250"/>
    <property type="project" value="UniProtKB"/>
</dbReference>
<dbReference type="GO" id="GO:0005768">
    <property type="term" value="C:endosome"/>
    <property type="evidence" value="ECO:0000250"/>
    <property type="project" value="UniProtKB"/>
</dbReference>
<dbReference type="GO" id="GO:0046581">
    <property type="term" value="C:intercellular canaliculus"/>
    <property type="evidence" value="ECO:0000314"/>
    <property type="project" value="MGI"/>
</dbReference>
<dbReference type="GO" id="GO:0046691">
    <property type="term" value="C:intracellular canaliculus"/>
    <property type="evidence" value="ECO:0000250"/>
    <property type="project" value="UniProtKB"/>
</dbReference>
<dbReference type="GO" id="GO:0016020">
    <property type="term" value="C:membrane"/>
    <property type="evidence" value="ECO:0000314"/>
    <property type="project" value="MGI"/>
</dbReference>
<dbReference type="GO" id="GO:0005886">
    <property type="term" value="C:plasma membrane"/>
    <property type="evidence" value="ECO:0000315"/>
    <property type="project" value="UniProtKB"/>
</dbReference>
<dbReference type="GO" id="GO:0055037">
    <property type="term" value="C:recycling endosome"/>
    <property type="evidence" value="ECO:0000250"/>
    <property type="project" value="UniProtKB"/>
</dbReference>
<dbReference type="GO" id="GO:0055038">
    <property type="term" value="C:recycling endosome membrane"/>
    <property type="evidence" value="ECO:0000250"/>
    <property type="project" value="UniProtKB"/>
</dbReference>
<dbReference type="GO" id="GO:0015432">
    <property type="term" value="F:ABC-type bile acid transporter activity"/>
    <property type="evidence" value="ECO:0000250"/>
    <property type="project" value="UniProtKB"/>
</dbReference>
<dbReference type="GO" id="GO:0008559">
    <property type="term" value="F:ABC-type xenobiotic transporter activity"/>
    <property type="evidence" value="ECO:0000250"/>
    <property type="project" value="UniProtKB"/>
</dbReference>
<dbReference type="GO" id="GO:0005524">
    <property type="term" value="F:ATP binding"/>
    <property type="evidence" value="ECO:0007669"/>
    <property type="project" value="UniProtKB-KW"/>
</dbReference>
<dbReference type="GO" id="GO:0016887">
    <property type="term" value="F:ATP hydrolysis activity"/>
    <property type="evidence" value="ECO:0007669"/>
    <property type="project" value="InterPro"/>
</dbReference>
<dbReference type="GO" id="GO:0015125">
    <property type="term" value="F:bile acid transmembrane transporter activity"/>
    <property type="evidence" value="ECO:0000315"/>
    <property type="project" value="UniProtKB"/>
</dbReference>
<dbReference type="GO" id="GO:0015126">
    <property type="term" value="F:canalicular bile acid transmembrane transporter activity"/>
    <property type="evidence" value="ECO:0000315"/>
    <property type="project" value="UniProtKB"/>
</dbReference>
<dbReference type="GO" id="GO:0015721">
    <property type="term" value="P:bile acid and bile salt transport"/>
    <property type="evidence" value="ECO:0000315"/>
    <property type="project" value="UniProtKB"/>
</dbReference>
<dbReference type="GO" id="GO:0008206">
    <property type="term" value="P:bile acid metabolic process"/>
    <property type="evidence" value="ECO:0000250"/>
    <property type="project" value="UniProtKB"/>
</dbReference>
<dbReference type="GO" id="GO:0015722">
    <property type="term" value="P:canalicular bile acid transport"/>
    <property type="evidence" value="ECO:0000315"/>
    <property type="project" value="UniProtKB"/>
</dbReference>
<dbReference type="GO" id="GO:0042632">
    <property type="term" value="P:cholesterol homeostasis"/>
    <property type="evidence" value="ECO:0000315"/>
    <property type="project" value="UniProtKB"/>
</dbReference>
<dbReference type="GO" id="GO:0006631">
    <property type="term" value="P:fatty acid metabolic process"/>
    <property type="evidence" value="ECO:0000315"/>
    <property type="project" value="UniProtKB"/>
</dbReference>
<dbReference type="GO" id="GO:0055088">
    <property type="term" value="P:lipid homeostasis"/>
    <property type="evidence" value="ECO:0000315"/>
    <property type="project" value="UniProtKB"/>
</dbReference>
<dbReference type="GO" id="GO:0055091">
    <property type="term" value="P:phospholipid homeostasis"/>
    <property type="evidence" value="ECO:0000315"/>
    <property type="project" value="UniProtKB"/>
</dbReference>
<dbReference type="GO" id="GO:0120189">
    <property type="term" value="P:positive regulation of bile acid secretion"/>
    <property type="evidence" value="ECO:0000315"/>
    <property type="project" value="UniProtKB"/>
</dbReference>
<dbReference type="GO" id="GO:0016567">
    <property type="term" value="P:protein ubiquitination"/>
    <property type="evidence" value="ECO:0000250"/>
    <property type="project" value="UniProtKB"/>
</dbReference>
<dbReference type="GO" id="GO:1904251">
    <property type="term" value="P:regulation of bile acid metabolic process"/>
    <property type="evidence" value="ECO:0000315"/>
    <property type="project" value="UniProtKB"/>
</dbReference>
<dbReference type="GO" id="GO:0031998">
    <property type="term" value="P:regulation of fatty acid beta-oxidation"/>
    <property type="evidence" value="ECO:0000315"/>
    <property type="project" value="UniProtKB"/>
</dbReference>
<dbReference type="GO" id="GO:0046618">
    <property type="term" value="P:xenobiotic export from cell"/>
    <property type="evidence" value="ECO:0000250"/>
    <property type="project" value="UniProtKB"/>
</dbReference>
<dbReference type="GO" id="GO:0006805">
    <property type="term" value="P:xenobiotic metabolic process"/>
    <property type="evidence" value="ECO:0000250"/>
    <property type="project" value="UniProtKB"/>
</dbReference>
<dbReference type="GO" id="GO:0006855">
    <property type="term" value="P:xenobiotic transmembrane transport"/>
    <property type="evidence" value="ECO:0000250"/>
    <property type="project" value="UniProtKB"/>
</dbReference>
<dbReference type="CDD" id="cd18577">
    <property type="entry name" value="ABC_6TM_Pgp_ABCB1_D1_like"/>
    <property type="match status" value="1"/>
</dbReference>
<dbReference type="CDD" id="cd18578">
    <property type="entry name" value="ABC_6TM_Pgp_ABCB1_D2_like"/>
    <property type="match status" value="1"/>
</dbReference>
<dbReference type="CDD" id="cd03249">
    <property type="entry name" value="ABC_MTABC3_MDL1_MDL2"/>
    <property type="match status" value="2"/>
</dbReference>
<dbReference type="FunFam" id="1.20.1560.10:FF:000018">
    <property type="entry name" value="ATP-binding cassette subfamily B member 11"/>
    <property type="match status" value="1"/>
</dbReference>
<dbReference type="FunFam" id="1.20.1560.10:FF:000046">
    <property type="entry name" value="ATP-binding cassette subfamily B member 11"/>
    <property type="match status" value="1"/>
</dbReference>
<dbReference type="FunFam" id="1.20.1560.10:FF:000051">
    <property type="entry name" value="ATP-binding cassette subfamily B member 11"/>
    <property type="match status" value="1"/>
</dbReference>
<dbReference type="FunFam" id="3.40.50.300:FF:000479">
    <property type="entry name" value="Multidrug resistance protein 1A"/>
    <property type="match status" value="2"/>
</dbReference>
<dbReference type="Gene3D" id="1.20.1560.10">
    <property type="entry name" value="ABC transporter type 1, transmembrane domain"/>
    <property type="match status" value="1"/>
</dbReference>
<dbReference type="Gene3D" id="3.40.50.300">
    <property type="entry name" value="P-loop containing nucleotide triphosphate hydrolases"/>
    <property type="match status" value="2"/>
</dbReference>
<dbReference type="InterPro" id="IPR003593">
    <property type="entry name" value="AAA+_ATPase"/>
</dbReference>
<dbReference type="InterPro" id="IPR011527">
    <property type="entry name" value="ABC1_TM_dom"/>
</dbReference>
<dbReference type="InterPro" id="IPR036640">
    <property type="entry name" value="ABC1_TM_sf"/>
</dbReference>
<dbReference type="InterPro" id="IPR003439">
    <property type="entry name" value="ABC_transporter-like_ATP-bd"/>
</dbReference>
<dbReference type="InterPro" id="IPR017871">
    <property type="entry name" value="ABC_transporter-like_CS"/>
</dbReference>
<dbReference type="InterPro" id="IPR027417">
    <property type="entry name" value="P-loop_NTPase"/>
</dbReference>
<dbReference type="InterPro" id="IPR039421">
    <property type="entry name" value="Type_1_exporter"/>
</dbReference>
<dbReference type="PANTHER" id="PTHR43394:SF23">
    <property type="entry name" value="ATP-BINDING CASSETTE SUBFAMILY B MEMBER 11, GENE 2"/>
    <property type="match status" value="1"/>
</dbReference>
<dbReference type="PANTHER" id="PTHR43394">
    <property type="entry name" value="ATP-DEPENDENT PERMEASE MDL1, MITOCHONDRIAL"/>
    <property type="match status" value="1"/>
</dbReference>
<dbReference type="Pfam" id="PF00664">
    <property type="entry name" value="ABC_membrane"/>
    <property type="match status" value="2"/>
</dbReference>
<dbReference type="Pfam" id="PF00005">
    <property type="entry name" value="ABC_tran"/>
    <property type="match status" value="2"/>
</dbReference>
<dbReference type="SMART" id="SM00382">
    <property type="entry name" value="AAA"/>
    <property type="match status" value="2"/>
</dbReference>
<dbReference type="SUPFAM" id="SSF90123">
    <property type="entry name" value="ABC transporter transmembrane region"/>
    <property type="match status" value="2"/>
</dbReference>
<dbReference type="SUPFAM" id="SSF52540">
    <property type="entry name" value="P-loop containing nucleoside triphosphate hydrolases"/>
    <property type="match status" value="2"/>
</dbReference>
<dbReference type="PROSITE" id="PS50929">
    <property type="entry name" value="ABC_TM1F"/>
    <property type="match status" value="2"/>
</dbReference>
<dbReference type="PROSITE" id="PS00211">
    <property type="entry name" value="ABC_TRANSPORTER_1"/>
    <property type="match status" value="1"/>
</dbReference>
<dbReference type="PROSITE" id="PS50893">
    <property type="entry name" value="ABC_TRANSPORTER_2"/>
    <property type="match status" value="2"/>
</dbReference>
<evidence type="ECO:0000250" key="1"/>
<evidence type="ECO:0000250" key="2">
    <source>
        <dbReference type="UniProtKB" id="O70127"/>
    </source>
</evidence>
<evidence type="ECO:0000250" key="3">
    <source>
        <dbReference type="UniProtKB" id="O95342"/>
    </source>
</evidence>
<evidence type="ECO:0000255" key="4"/>
<evidence type="ECO:0000255" key="5">
    <source>
        <dbReference type="PROSITE-ProRule" id="PRU00434"/>
    </source>
</evidence>
<evidence type="ECO:0000255" key="6">
    <source>
        <dbReference type="PROSITE-ProRule" id="PRU00441"/>
    </source>
</evidence>
<evidence type="ECO:0000256" key="7">
    <source>
        <dbReference type="SAM" id="MobiDB-lite"/>
    </source>
</evidence>
<evidence type="ECO:0000269" key="8">
    <source>
    </source>
</evidence>
<evidence type="ECO:0000269" key="9">
    <source>
    </source>
</evidence>
<evidence type="ECO:0000269" key="10">
    <source>
    </source>
</evidence>
<evidence type="ECO:0000269" key="11">
    <source>
    </source>
</evidence>
<evidence type="ECO:0000269" key="12">
    <source>
    </source>
</evidence>
<evidence type="ECO:0000303" key="13">
    <source ref="4"/>
</evidence>
<evidence type="ECO:0000305" key="14"/>
<evidence type="ECO:0000305" key="15">
    <source>
    </source>
</evidence>
<evidence type="ECO:0000312" key="16">
    <source>
        <dbReference type="MGI" id="MGI:1351619"/>
    </source>
</evidence>
<evidence type="ECO:0007744" key="17">
    <source>
    </source>
</evidence>
<sequence length="1321" mass="146749">MSDSVILRSVKKFGEENHAFESDGFHNNDKKSRLQDKKKGEGARVGFFELFRFSSSKDNWLMFMGSVCALLHGMAQPGMIIVFGILTDIFVEYDIERQELSIPEKVCMNNTIVWINSSFNQNMTNGTSCGLVDINSEVIKFSGIYAGVGVAVLILGYFQIRLWVITGARQIRKMRKFYFRRIMRMEIGWFDCTSVGELNSRFSDDINKIDEAIADQMALFLQRLSTALSGLLLGFYRGWKLTLVILAVSPLIGIGAAVIGLSVAKFTELELKAYAKAGSIADEVLSSIRTVAAFGGENKEVERYEKNLMFAQRWGIWKGMVMGFFTGYMWCLIFFCYALAFWYGSRLVLDEGEYTPGTLIQIFLCVIIAAMNIGNASSCLEIFSTGCSAASSIFQTIDRQPVMDCMSGDGYKLDRIKGEIEFHNVTFHYPSRPEVKILNNLSMVIKPGETTAFVGSSGAGKSTALQLIQRFYDPCEGMVTLDGHDIRSLNIRWLRDQIGIVEQEPVLFSTTIAENIRLGREEATMEDIVQAAKDANAYNFIMALPQQFDTLVGEGGGQMSGGQKQRVAIARALIRKPKILLLDMATSALDNESEAKVQGALNKIQHGHTIISVAHRLSTVRSADVIIGFEHGTAVERGTHEELLERKGVYFMLVTLQSQEDNTHKETGIKGKDTTEGDTPERTFSRGSYQDSLRASIRQRSKSQLSHLSHEPPLAIGDHKSSYEDRKDNDVLVEEVEPAPVRRILKYNISEWPYILVGALCAAINGAVTPIYSLLFSQILKTFSLVDKEQQRSEIYSMCLFFVILGCVSLFTQFLQGYNFAKSGELLTKRLRKFGFKAMLRQDIGWFDDLKNNPGVLTTRLATDASQVQGATGSQVGMMVNSFTNIFVAVLIAFLFNWKLSLVISVFFPFLALSGAVQTKMLTGFASQDKEILEKAGQITNEALSNIRTVAGIGVEGRFIKAFEVELEKSYKTAIRKANVYGLCYAFSQGISFLANSAAYRYGGYLIVYEDLNFSYVFRVVSSIAMSATAVGRTFSYTPSYAKAKISAARFFQLLDRKPPIDVYSGAGEKWDNFQGKIDFIDCKFTYPSRPDIQVLNGLSVSVDPGQTLAFVGSSGCGKSTSIQLLERFYDPDQGTVMIDGHDSKKVNVQFLRSNIGIVSQEPVLFDCSIMDNIKYGDNTKEISVERAIAAAKQAQLHDFVMSLPEKYETNVGIQGSQLSRGEKQRIAIARAIVRDPKILLLDEATSALDTESEKTVQLALDKAREGRTCIVIAHRLSTIQNSDIIAVMSQGVVIEKGTHKKLMDQKGAYYKLVITGAPIS</sequence>